<proteinExistence type="inferred from homology"/>
<comment type="function">
    <text evidence="1">Catalyzes carboxymethyl transfer from carboxy-S-adenosyl-L-methionine (Cx-SAM) to 5-hydroxyuridine (ho5U) to form 5-carboxymethoxyuridine (cmo5U) at position 34 in tRNAs.</text>
</comment>
<comment type="catalytic activity">
    <reaction evidence="1">
        <text>carboxy-S-adenosyl-L-methionine + 5-hydroxyuridine(34) in tRNA = 5-carboxymethoxyuridine(34) in tRNA + S-adenosyl-L-homocysteine + H(+)</text>
        <dbReference type="Rhea" id="RHEA:52848"/>
        <dbReference type="Rhea" id="RHEA-COMP:13381"/>
        <dbReference type="Rhea" id="RHEA-COMP:13383"/>
        <dbReference type="ChEBI" id="CHEBI:15378"/>
        <dbReference type="ChEBI" id="CHEBI:57856"/>
        <dbReference type="ChEBI" id="CHEBI:134278"/>
        <dbReference type="ChEBI" id="CHEBI:136877"/>
        <dbReference type="ChEBI" id="CHEBI:136879"/>
    </reaction>
</comment>
<comment type="subunit">
    <text evidence="1">Homotetramer.</text>
</comment>
<comment type="similarity">
    <text evidence="1">Belongs to the class I-like SAM-binding methyltransferase superfamily. CmoB family.</text>
</comment>
<dbReference type="EC" id="2.5.1.-" evidence="1"/>
<dbReference type="EMBL" id="AP009240">
    <property type="protein sequence ID" value="BAG77630.1"/>
    <property type="molecule type" value="Genomic_DNA"/>
</dbReference>
<dbReference type="RefSeq" id="WP_000564742.1">
    <property type="nucleotide sequence ID" value="NC_011415.1"/>
</dbReference>
<dbReference type="SMR" id="B6I1E9"/>
<dbReference type="KEGG" id="ecy:ECSE_2106"/>
<dbReference type="HOGENOM" id="CLU_052665_0_0_6"/>
<dbReference type="Proteomes" id="UP000008199">
    <property type="component" value="Chromosome"/>
</dbReference>
<dbReference type="GO" id="GO:0016765">
    <property type="term" value="F:transferase activity, transferring alkyl or aryl (other than methyl) groups"/>
    <property type="evidence" value="ECO:0007669"/>
    <property type="project" value="UniProtKB-UniRule"/>
</dbReference>
<dbReference type="GO" id="GO:0002098">
    <property type="term" value="P:tRNA wobble uridine modification"/>
    <property type="evidence" value="ECO:0007669"/>
    <property type="project" value="InterPro"/>
</dbReference>
<dbReference type="CDD" id="cd02440">
    <property type="entry name" value="AdoMet_MTases"/>
    <property type="match status" value="1"/>
</dbReference>
<dbReference type="FunFam" id="3.40.50.150:FF:000080">
    <property type="entry name" value="tRNA U34 carboxymethyltransferase"/>
    <property type="match status" value="1"/>
</dbReference>
<dbReference type="Gene3D" id="3.40.50.150">
    <property type="entry name" value="Vaccinia Virus protein VP39"/>
    <property type="match status" value="1"/>
</dbReference>
<dbReference type="HAMAP" id="MF_01590">
    <property type="entry name" value="tRNA_carboxymethyltr_CmoB"/>
    <property type="match status" value="1"/>
</dbReference>
<dbReference type="InterPro" id="IPR010017">
    <property type="entry name" value="CmoB"/>
</dbReference>
<dbReference type="InterPro" id="IPR027555">
    <property type="entry name" value="Mo5U34_MeTrfas-like"/>
</dbReference>
<dbReference type="InterPro" id="IPR029063">
    <property type="entry name" value="SAM-dependent_MTases_sf"/>
</dbReference>
<dbReference type="NCBIfam" id="NF011650">
    <property type="entry name" value="PRK15068.1"/>
    <property type="match status" value="1"/>
</dbReference>
<dbReference type="NCBIfam" id="TIGR00452">
    <property type="entry name" value="tRNA 5-methoxyuridine(34)/uridine 5-oxyacetic acid(34) synthase CmoB"/>
    <property type="match status" value="1"/>
</dbReference>
<dbReference type="PANTHER" id="PTHR43861:SF3">
    <property type="entry name" value="PUTATIVE (AFU_ORTHOLOGUE AFUA_2G14390)-RELATED"/>
    <property type="match status" value="1"/>
</dbReference>
<dbReference type="PANTHER" id="PTHR43861">
    <property type="entry name" value="TRANS-ACONITATE 2-METHYLTRANSFERASE-RELATED"/>
    <property type="match status" value="1"/>
</dbReference>
<dbReference type="Pfam" id="PF08003">
    <property type="entry name" value="Methyltransf_9"/>
    <property type="match status" value="1"/>
</dbReference>
<dbReference type="SUPFAM" id="SSF53335">
    <property type="entry name" value="S-adenosyl-L-methionine-dependent methyltransferases"/>
    <property type="match status" value="1"/>
</dbReference>
<gene>
    <name evidence="1" type="primary">cmoB</name>
    <name type="ordered locus">ECSE_2106</name>
</gene>
<name>CMOB_ECOSE</name>
<sequence length="323" mass="37127">MIDFGNFYSLIAKNHLSHWLETLPAQIANWQREQQHGLFKQWSNAVEFLPEIKPYRLDLLHSVTAESEEPLSTGQIKRIETLMRNLMPWRKGPFSLYGVNIDTEWRSDWKWDRVLPHLSDLTGRTILDVGCGSGYHMWRMIGAGAHLAVGIDPTQLFLCQFEAVRKLLGNDQRAHLIPLGIEQLPALKAFDTVFSMGVLYHRRSPLEHLWQLKDQLVNEGELVLETLVIDGDENTVLVPGDRYAQMRNVYFIPSALALKNWLKKCGFVDIRIVDVCVTTTEEQRRTEWMVTESLSDFLDPHDPSKTVEGYPAPKRAVLIARKP</sequence>
<feature type="chain" id="PRO_1000201290" description="tRNA U34 carboxymethyltransferase">
    <location>
        <begin position="1"/>
        <end position="323"/>
    </location>
</feature>
<feature type="binding site" evidence="1">
    <location>
        <position position="91"/>
    </location>
    <ligand>
        <name>carboxy-S-adenosyl-L-methionine</name>
        <dbReference type="ChEBI" id="CHEBI:134278"/>
    </ligand>
</feature>
<feature type="binding site" evidence="1">
    <location>
        <position position="105"/>
    </location>
    <ligand>
        <name>carboxy-S-adenosyl-L-methionine</name>
        <dbReference type="ChEBI" id="CHEBI:134278"/>
    </ligand>
</feature>
<feature type="binding site" evidence="1">
    <location>
        <position position="110"/>
    </location>
    <ligand>
        <name>carboxy-S-adenosyl-L-methionine</name>
        <dbReference type="ChEBI" id="CHEBI:134278"/>
    </ligand>
</feature>
<feature type="binding site" evidence="1">
    <location>
        <position position="130"/>
    </location>
    <ligand>
        <name>carboxy-S-adenosyl-L-methionine</name>
        <dbReference type="ChEBI" id="CHEBI:134278"/>
    </ligand>
</feature>
<feature type="binding site" evidence="1">
    <location>
        <begin position="152"/>
        <end position="154"/>
    </location>
    <ligand>
        <name>carboxy-S-adenosyl-L-methionine</name>
        <dbReference type="ChEBI" id="CHEBI:134278"/>
    </ligand>
</feature>
<feature type="binding site" evidence="1">
    <location>
        <begin position="181"/>
        <end position="182"/>
    </location>
    <ligand>
        <name>carboxy-S-adenosyl-L-methionine</name>
        <dbReference type="ChEBI" id="CHEBI:134278"/>
    </ligand>
</feature>
<feature type="binding site" evidence="1">
    <location>
        <position position="196"/>
    </location>
    <ligand>
        <name>carboxy-S-adenosyl-L-methionine</name>
        <dbReference type="ChEBI" id="CHEBI:134278"/>
    </ligand>
</feature>
<feature type="binding site" evidence="1">
    <location>
        <position position="200"/>
    </location>
    <ligand>
        <name>carboxy-S-adenosyl-L-methionine</name>
        <dbReference type="ChEBI" id="CHEBI:134278"/>
    </ligand>
</feature>
<feature type="binding site" evidence="1">
    <location>
        <position position="315"/>
    </location>
    <ligand>
        <name>carboxy-S-adenosyl-L-methionine</name>
        <dbReference type="ChEBI" id="CHEBI:134278"/>
    </ligand>
</feature>
<accession>B6I1E9</accession>
<reference key="1">
    <citation type="journal article" date="2008" name="DNA Res.">
        <title>Complete genome sequence and comparative analysis of the wild-type commensal Escherichia coli strain SE11 isolated from a healthy adult.</title>
        <authorList>
            <person name="Oshima K."/>
            <person name="Toh H."/>
            <person name="Ogura Y."/>
            <person name="Sasamoto H."/>
            <person name="Morita H."/>
            <person name="Park S.-H."/>
            <person name="Ooka T."/>
            <person name="Iyoda S."/>
            <person name="Taylor T.D."/>
            <person name="Hayashi T."/>
            <person name="Itoh K."/>
            <person name="Hattori M."/>
        </authorList>
    </citation>
    <scope>NUCLEOTIDE SEQUENCE [LARGE SCALE GENOMIC DNA]</scope>
    <source>
        <strain>SE11</strain>
    </source>
</reference>
<keyword id="KW-0808">Transferase</keyword>
<keyword id="KW-0819">tRNA processing</keyword>
<protein>
    <recommendedName>
        <fullName evidence="1">tRNA U34 carboxymethyltransferase</fullName>
        <ecNumber evidence="1">2.5.1.-</ecNumber>
    </recommendedName>
</protein>
<evidence type="ECO:0000255" key="1">
    <source>
        <dbReference type="HAMAP-Rule" id="MF_01590"/>
    </source>
</evidence>
<organism>
    <name type="scientific">Escherichia coli (strain SE11)</name>
    <dbReference type="NCBI Taxonomy" id="409438"/>
    <lineage>
        <taxon>Bacteria</taxon>
        <taxon>Pseudomonadati</taxon>
        <taxon>Pseudomonadota</taxon>
        <taxon>Gammaproteobacteria</taxon>
        <taxon>Enterobacterales</taxon>
        <taxon>Enterobacteriaceae</taxon>
        <taxon>Escherichia</taxon>
    </lineage>
</organism>